<sequence length="293" mass="32492">MQIRRRSPNPPVEVDTLRYQVKVPDGEPRHILEEIVWHKEKEVDRLRESLPLLELRKQVQHLPPPQDFLGAITQGKTQPALIAEVKKASPSKGVIREDFDPVAIAQAYVKGGASCLSVLTDAKFFQGSFENLALVRQSVDLPLLCKEFILYPYQIYLARTKGADAVLLIAAILSDRDLSYFLKIIQTLGMTALIEVHSLTELDRVLAIEGVSLIGINNRNLETFEVDLKTTSQLLAARRDKIQALGIKIISESGLHTPDDLQFVQQAGSDGVLIGESLVKQPDPTQAIANLFG</sequence>
<evidence type="ECO:0000255" key="1">
    <source>
        <dbReference type="HAMAP-Rule" id="MF_00134"/>
    </source>
</evidence>
<accession>B7K0H0</accession>
<gene>
    <name evidence="1" type="primary">trpC</name>
    <name type="ordered locus">PCC8801_3489</name>
</gene>
<proteinExistence type="inferred from homology"/>
<reference key="1">
    <citation type="journal article" date="2011" name="MBio">
        <title>Novel metabolic attributes of the genus Cyanothece, comprising a group of unicellular nitrogen-fixing Cyanobacteria.</title>
        <authorList>
            <person name="Bandyopadhyay A."/>
            <person name="Elvitigala T."/>
            <person name="Welsh E."/>
            <person name="Stockel J."/>
            <person name="Liberton M."/>
            <person name="Min H."/>
            <person name="Sherman L.A."/>
            <person name="Pakrasi H.B."/>
        </authorList>
    </citation>
    <scope>NUCLEOTIDE SEQUENCE [LARGE SCALE GENOMIC DNA]</scope>
    <source>
        <strain>PCC 8801 / RF-1</strain>
    </source>
</reference>
<comment type="catalytic activity">
    <reaction evidence="1">
        <text>1-(2-carboxyphenylamino)-1-deoxy-D-ribulose 5-phosphate + H(+) = (1S,2R)-1-C-(indol-3-yl)glycerol 3-phosphate + CO2 + H2O</text>
        <dbReference type="Rhea" id="RHEA:23476"/>
        <dbReference type="ChEBI" id="CHEBI:15377"/>
        <dbReference type="ChEBI" id="CHEBI:15378"/>
        <dbReference type="ChEBI" id="CHEBI:16526"/>
        <dbReference type="ChEBI" id="CHEBI:58613"/>
        <dbReference type="ChEBI" id="CHEBI:58866"/>
        <dbReference type="EC" id="4.1.1.48"/>
    </reaction>
</comment>
<comment type="pathway">
    <text evidence="1">Amino-acid biosynthesis; L-tryptophan biosynthesis; L-tryptophan from chorismate: step 4/5.</text>
</comment>
<comment type="similarity">
    <text evidence="1">Belongs to the TrpC family.</text>
</comment>
<keyword id="KW-0028">Amino-acid biosynthesis</keyword>
<keyword id="KW-0057">Aromatic amino acid biosynthesis</keyword>
<keyword id="KW-0210">Decarboxylase</keyword>
<keyword id="KW-0456">Lyase</keyword>
<keyword id="KW-1185">Reference proteome</keyword>
<keyword id="KW-0822">Tryptophan biosynthesis</keyword>
<name>TRPC_RIPO1</name>
<feature type="chain" id="PRO_1000198774" description="Indole-3-glycerol phosphate synthase">
    <location>
        <begin position="1"/>
        <end position="293"/>
    </location>
</feature>
<organism>
    <name type="scientific">Rippkaea orientalis (strain PCC 8801 / RF-1)</name>
    <name type="common">Cyanothece sp. (strain PCC 8801)</name>
    <dbReference type="NCBI Taxonomy" id="41431"/>
    <lineage>
        <taxon>Bacteria</taxon>
        <taxon>Bacillati</taxon>
        <taxon>Cyanobacteriota</taxon>
        <taxon>Cyanophyceae</taxon>
        <taxon>Oscillatoriophycideae</taxon>
        <taxon>Chroococcales</taxon>
        <taxon>Aphanothecaceae</taxon>
        <taxon>Rippkaea</taxon>
        <taxon>Rippkaea orientalis</taxon>
    </lineage>
</organism>
<protein>
    <recommendedName>
        <fullName evidence="1">Indole-3-glycerol phosphate synthase</fullName>
        <shortName evidence="1">IGPS</shortName>
        <ecNumber evidence="1">4.1.1.48</ecNumber>
    </recommendedName>
</protein>
<dbReference type="EC" id="4.1.1.48" evidence="1"/>
<dbReference type="EMBL" id="CP001287">
    <property type="protein sequence ID" value="ACK67454.1"/>
    <property type="molecule type" value="Genomic_DNA"/>
</dbReference>
<dbReference type="RefSeq" id="WP_012596713.1">
    <property type="nucleotide sequence ID" value="NC_011726.1"/>
</dbReference>
<dbReference type="SMR" id="B7K0H0"/>
<dbReference type="STRING" id="41431.PCC8801_3489"/>
<dbReference type="KEGG" id="cyp:PCC8801_3489"/>
<dbReference type="eggNOG" id="COG0134">
    <property type="taxonomic scope" value="Bacteria"/>
</dbReference>
<dbReference type="HOGENOM" id="CLU_034247_1_0_3"/>
<dbReference type="OrthoDB" id="9804217at2"/>
<dbReference type="UniPathway" id="UPA00035">
    <property type="reaction ID" value="UER00043"/>
</dbReference>
<dbReference type="Proteomes" id="UP000008204">
    <property type="component" value="Chromosome"/>
</dbReference>
<dbReference type="GO" id="GO:0004425">
    <property type="term" value="F:indole-3-glycerol-phosphate synthase activity"/>
    <property type="evidence" value="ECO:0007669"/>
    <property type="project" value="UniProtKB-UniRule"/>
</dbReference>
<dbReference type="GO" id="GO:0004640">
    <property type="term" value="F:phosphoribosylanthranilate isomerase activity"/>
    <property type="evidence" value="ECO:0007669"/>
    <property type="project" value="TreeGrafter"/>
</dbReference>
<dbReference type="GO" id="GO:0000162">
    <property type="term" value="P:L-tryptophan biosynthetic process"/>
    <property type="evidence" value="ECO:0007669"/>
    <property type="project" value="UniProtKB-UniRule"/>
</dbReference>
<dbReference type="CDD" id="cd00331">
    <property type="entry name" value="IGPS"/>
    <property type="match status" value="1"/>
</dbReference>
<dbReference type="FunFam" id="3.20.20.70:FF:000024">
    <property type="entry name" value="Indole-3-glycerol phosphate synthase"/>
    <property type="match status" value="1"/>
</dbReference>
<dbReference type="Gene3D" id="3.20.20.70">
    <property type="entry name" value="Aldolase class I"/>
    <property type="match status" value="1"/>
</dbReference>
<dbReference type="HAMAP" id="MF_00134_B">
    <property type="entry name" value="IGPS_B"/>
    <property type="match status" value="1"/>
</dbReference>
<dbReference type="InterPro" id="IPR013785">
    <property type="entry name" value="Aldolase_TIM"/>
</dbReference>
<dbReference type="InterPro" id="IPR045186">
    <property type="entry name" value="Indole-3-glycerol_P_synth"/>
</dbReference>
<dbReference type="InterPro" id="IPR013798">
    <property type="entry name" value="Indole-3-glycerol_P_synth_dom"/>
</dbReference>
<dbReference type="InterPro" id="IPR001468">
    <property type="entry name" value="Indole-3-GlycerolPSynthase_CS"/>
</dbReference>
<dbReference type="InterPro" id="IPR011060">
    <property type="entry name" value="RibuloseP-bd_barrel"/>
</dbReference>
<dbReference type="NCBIfam" id="NF001372">
    <property type="entry name" value="PRK00278.1-4"/>
    <property type="match status" value="1"/>
</dbReference>
<dbReference type="NCBIfam" id="NF001377">
    <property type="entry name" value="PRK00278.2-4"/>
    <property type="match status" value="1"/>
</dbReference>
<dbReference type="PANTHER" id="PTHR22854:SF2">
    <property type="entry name" value="INDOLE-3-GLYCEROL-PHOSPHATE SYNTHASE"/>
    <property type="match status" value="1"/>
</dbReference>
<dbReference type="PANTHER" id="PTHR22854">
    <property type="entry name" value="TRYPTOPHAN BIOSYNTHESIS PROTEIN"/>
    <property type="match status" value="1"/>
</dbReference>
<dbReference type="Pfam" id="PF00218">
    <property type="entry name" value="IGPS"/>
    <property type="match status" value="1"/>
</dbReference>
<dbReference type="SUPFAM" id="SSF51366">
    <property type="entry name" value="Ribulose-phoshate binding barrel"/>
    <property type="match status" value="1"/>
</dbReference>
<dbReference type="PROSITE" id="PS00614">
    <property type="entry name" value="IGPS"/>
    <property type="match status" value="1"/>
</dbReference>